<comment type="subcellular location">
    <subcellularLocation>
        <location evidence="1">Cell membrane</location>
        <topology evidence="1">Multi-pass membrane protein</topology>
    </subcellularLocation>
</comment>
<comment type="similarity">
    <text evidence="1">Belongs to the UPF0391 family.</text>
</comment>
<comment type="sequence caution" evidence="2">
    <conflict type="erroneous initiation">
        <sequence resource="EMBL-CDS" id="ABQ61912"/>
    </conflict>
</comment>
<reference key="1">
    <citation type="journal article" date="2009" name="PLoS ONE">
        <title>Genome degradation in Brucella ovis corresponds with narrowing of its host range and tissue tropism.</title>
        <authorList>
            <person name="Tsolis R.M."/>
            <person name="Seshadri R."/>
            <person name="Santos R.L."/>
            <person name="Sangari F.J."/>
            <person name="Lobo J.M."/>
            <person name="de Jong M.F."/>
            <person name="Ren Q."/>
            <person name="Myers G."/>
            <person name="Brinkac L.M."/>
            <person name="Nelson W.C."/>
            <person name="Deboy R.T."/>
            <person name="Angiuoli S."/>
            <person name="Khouri H."/>
            <person name="Dimitrov G."/>
            <person name="Robinson J.R."/>
            <person name="Mulligan S."/>
            <person name="Walker R.L."/>
            <person name="Elzer P.E."/>
            <person name="Hassan K.A."/>
            <person name="Paulsen I.T."/>
        </authorList>
    </citation>
    <scope>NUCLEOTIDE SEQUENCE [LARGE SCALE GENOMIC DNA]</scope>
    <source>
        <strain>ATCC 25840 / 63/290 / NCTC 10512</strain>
    </source>
</reference>
<evidence type="ECO:0000255" key="1">
    <source>
        <dbReference type="HAMAP-Rule" id="MF_01361"/>
    </source>
</evidence>
<evidence type="ECO:0000305" key="2"/>
<accession>A5VS16</accession>
<dbReference type="EMBL" id="CP000708">
    <property type="protein sequence ID" value="ABQ61912.1"/>
    <property type="status" value="ALT_INIT"/>
    <property type="molecule type" value="Genomic_DNA"/>
</dbReference>
<dbReference type="RefSeq" id="WP_002964748.1">
    <property type="nucleotide sequence ID" value="NC_009505.1"/>
</dbReference>
<dbReference type="KEGG" id="bov:BOV_1603"/>
<dbReference type="HOGENOM" id="CLU_187346_0_0_5"/>
<dbReference type="Proteomes" id="UP000006383">
    <property type="component" value="Chromosome I"/>
</dbReference>
<dbReference type="GO" id="GO:0005886">
    <property type="term" value="C:plasma membrane"/>
    <property type="evidence" value="ECO:0007669"/>
    <property type="project" value="UniProtKB-SubCell"/>
</dbReference>
<dbReference type="HAMAP" id="MF_01361">
    <property type="entry name" value="UPF0391"/>
    <property type="match status" value="1"/>
</dbReference>
<dbReference type="InterPro" id="IPR009760">
    <property type="entry name" value="DUF1328"/>
</dbReference>
<dbReference type="NCBIfam" id="NF010228">
    <property type="entry name" value="PRK13682.1-3"/>
    <property type="match status" value="1"/>
</dbReference>
<dbReference type="Pfam" id="PF07043">
    <property type="entry name" value="DUF1328"/>
    <property type="match status" value="1"/>
</dbReference>
<dbReference type="PIRSF" id="PIRSF036466">
    <property type="entry name" value="UCP036466"/>
    <property type="match status" value="1"/>
</dbReference>
<proteinExistence type="inferred from homology"/>
<gene>
    <name type="ordered locus">BOV_1603</name>
</gene>
<name>Y1603_BRUO2</name>
<feature type="chain" id="PRO_0000314220" description="UPF0391 membrane protein BOV_1603">
    <location>
        <begin position="1"/>
        <end position="54"/>
    </location>
</feature>
<feature type="transmembrane region" description="Helical" evidence="1">
    <location>
        <begin position="5"/>
        <end position="25"/>
    </location>
</feature>
<feature type="transmembrane region" description="Helical" evidence="1">
    <location>
        <begin position="28"/>
        <end position="48"/>
    </location>
</feature>
<protein>
    <recommendedName>
        <fullName evidence="1">UPF0391 membrane protein BOV_1603</fullName>
    </recommendedName>
</protein>
<keyword id="KW-1003">Cell membrane</keyword>
<keyword id="KW-0472">Membrane</keyword>
<keyword id="KW-0812">Transmembrane</keyword>
<keyword id="KW-1133">Transmembrane helix</keyword>
<organism>
    <name type="scientific">Brucella ovis (strain ATCC 25840 / 63/290 / NCTC 10512)</name>
    <dbReference type="NCBI Taxonomy" id="444178"/>
    <lineage>
        <taxon>Bacteria</taxon>
        <taxon>Pseudomonadati</taxon>
        <taxon>Pseudomonadota</taxon>
        <taxon>Alphaproteobacteria</taxon>
        <taxon>Hyphomicrobiales</taxon>
        <taxon>Brucellaceae</taxon>
        <taxon>Brucella/Ochrobactrum group</taxon>
        <taxon>Brucella</taxon>
    </lineage>
</organism>
<sequence length="54" mass="5514">MLYYVLVFLVVALVAGALGFGGIAGASAGIAQILFFVFLALLVISLIASAIRKA</sequence>